<protein>
    <recommendedName>
        <fullName>Hemocyanin B chain</fullName>
    </recommendedName>
</protein>
<name>HCYB_ASTLP</name>
<keyword id="KW-0186">Copper</keyword>
<keyword id="KW-0903">Direct protein sequencing</keyword>
<keyword id="KW-1015">Disulfide bond</keyword>
<keyword id="KW-0479">Metal-binding</keyword>
<keyword id="KW-0561">Oxygen transport</keyword>
<keyword id="KW-0964">Secreted</keyword>
<keyword id="KW-0813">Transport</keyword>
<comment type="function">
    <text evidence="2">Hemocyanins are copper-containing oxygen carriers occurring freely dissolved in the hemolymph of many mollusks and arthropods.</text>
</comment>
<comment type="subcellular location">
    <subcellularLocation>
        <location>Secreted</location>
        <location>Extracellular space</location>
    </subcellularLocation>
</comment>
<comment type="tissue specificity">
    <text>Hemolymph.</text>
</comment>
<comment type="miscellaneous">
    <text evidence="2">The B chain contains two copper-binding sites. Three histidine residues are ligands to each copper ion.</text>
</comment>
<comment type="similarity">
    <text evidence="2">Belongs to the tyrosinase family. Hemocyanin subfamily.</text>
</comment>
<proteinExistence type="evidence at protein level"/>
<organism evidence="2">
    <name type="scientific">Astacus leptodactylus</name>
    <name type="common">Turkish narrow-clawed crayfish</name>
    <name type="synonym">Pontastacus leptodactylus</name>
    <dbReference type="NCBI Taxonomy" id="6717"/>
    <lineage>
        <taxon>Eukaryota</taxon>
        <taxon>Metazoa</taxon>
        <taxon>Ecdysozoa</taxon>
        <taxon>Arthropoda</taxon>
        <taxon>Crustacea</taxon>
        <taxon>Multicrustacea</taxon>
        <taxon>Malacostraca</taxon>
        <taxon>Eumalacostraca</taxon>
        <taxon>Eucarida</taxon>
        <taxon>Decapoda</taxon>
        <taxon>Pleocyemata</taxon>
        <taxon>Astacidea</taxon>
        <taxon>Astacoidea</taxon>
        <taxon>Astacidae</taxon>
        <taxon>Astacus</taxon>
    </lineage>
</organism>
<reference evidence="2" key="1">
    <citation type="book" date="1986" name="Invertebrate Oxygen Carriers">
        <title>Partial amino acid sequence of crayfish (Astacus Leptodactylus) hemocyanin.</title>
        <editorList>
            <person name="Linzen B."/>
        </editorList>
        <authorList>
            <person name="Schneider H.-J."/>
            <person name="Voll W."/>
            <person name="Lehmann L."/>
            <person name="Grisshammer R."/>
            <person name="Goettgens A."/>
            <person name="Linzen B."/>
        </authorList>
    </citation>
    <scope>PROTEIN SEQUENCE</scope>
    <source>
        <tissue>Blood</tissue>
    </source>
</reference>
<feature type="chain" id="PRO_0000204298" description="Hemocyanin B chain">
    <location>
        <begin position="1"/>
        <end position="566"/>
    </location>
</feature>
<feature type="binding site" evidence="1">
    <location>
        <position position="183"/>
    </location>
    <ligand>
        <name>Cu cation</name>
        <dbReference type="ChEBI" id="CHEBI:23378"/>
        <label>A</label>
    </ligand>
</feature>
<feature type="binding site" evidence="1">
    <location>
        <position position="187"/>
    </location>
    <ligand>
        <name>Cu cation</name>
        <dbReference type="ChEBI" id="CHEBI:23378"/>
        <label>A</label>
    </ligand>
</feature>
<feature type="binding site" evidence="1">
    <location>
        <position position="213"/>
    </location>
    <ligand>
        <name>Cu cation</name>
        <dbReference type="ChEBI" id="CHEBI:23378"/>
        <label>A</label>
    </ligand>
</feature>
<feature type="binding site" evidence="1">
    <location>
        <position position="309"/>
    </location>
    <ligand>
        <name>Cu cation</name>
        <dbReference type="ChEBI" id="CHEBI:23378"/>
        <label>B</label>
    </ligand>
</feature>
<feature type="binding site" evidence="1">
    <location>
        <position position="313"/>
    </location>
    <ligand>
        <name>Cu cation</name>
        <dbReference type="ChEBI" id="CHEBI:23378"/>
        <label>B</label>
    </ligand>
</feature>
<feature type="binding site" evidence="1">
    <location>
        <position position="347"/>
    </location>
    <ligand>
        <name>Cu cation</name>
        <dbReference type="ChEBI" id="CHEBI:23378"/>
        <label>B</label>
    </ligand>
</feature>
<feature type="disulfide bond" evidence="1">
    <location>
        <begin position="82"/>
        <end position="87"/>
    </location>
</feature>
<feature type="sequence variant" evidence="2">
    <original>A</original>
    <variation>D</variation>
    <location>
        <position position="42"/>
    </location>
</feature>
<feature type="sequence variant" evidence="2">
    <original>A</original>
    <variation>G</variation>
    <location>
        <position position="146"/>
    </location>
</feature>
<feature type="sequence variant" evidence="2">
    <original>I</original>
    <variation>G</variation>
    <location>
        <position position="235"/>
    </location>
</feature>
<feature type="sequence variant" evidence="2">
    <original>D</original>
    <variation>A</variation>
    <location>
        <position position="447"/>
    </location>
</feature>
<feature type="unsure residue" description="I or L">
    <location>
        <position position="45"/>
    </location>
</feature>
<feature type="unsure residue" evidence="2">
    <location>
        <position position="50"/>
    </location>
</feature>
<feature type="unsure residue" evidence="2">
    <location>
        <position position="74"/>
    </location>
</feature>
<feature type="unsure residue" description="I or L">
    <location>
        <position position="108"/>
    </location>
</feature>
<feature type="unsure residue" description="I or L">
    <location>
        <position position="113"/>
    </location>
</feature>
<feature type="unsure residue" description="I or L">
    <location>
        <position position="117"/>
    </location>
</feature>
<feature type="unsure residue" description="I or L">
    <location>
        <position position="121"/>
    </location>
</feature>
<feature type="unsure residue" description="I or L">
    <location>
        <position position="123"/>
    </location>
</feature>
<feature type="unsure residue" description="I or L">
    <location>
        <position position="126"/>
    </location>
</feature>
<feature type="unsure residue" description="I or L">
    <location>
        <position position="133"/>
    </location>
</feature>
<feature type="unsure residue" description="I or L">
    <location>
        <position position="140"/>
    </location>
</feature>
<feature type="unsure residue" description="I or L">
    <location>
        <position position="225"/>
    </location>
</feature>
<feature type="unsure residue" description="I or L">
    <location>
        <position position="229"/>
    </location>
</feature>
<feature type="unsure residue" description="I or L">
    <location>
        <position position="235"/>
    </location>
</feature>
<feature type="unsure residue" description="I or L">
    <location>
        <position position="308"/>
    </location>
</feature>
<feature type="unsure residue" description="I or L">
    <location>
        <position position="314"/>
    </location>
</feature>
<feature type="unsure residue" description="I or L">
    <location>
        <position position="316"/>
    </location>
</feature>
<feature type="unsure residue" description="I or L">
    <location>
        <position position="369"/>
    </location>
</feature>
<feature type="unsure residue" description="I or L">
    <location>
        <position position="376"/>
    </location>
</feature>
<feature type="unsure residue" description="I or L">
    <location>
        <position position="410"/>
    </location>
</feature>
<feature type="unsure residue" description="I or L">
    <location>
        <position position="419"/>
    </location>
</feature>
<feature type="unsure residue" description="I or L">
    <location>
        <position position="421"/>
    </location>
</feature>
<feature type="unsure residue" description="I or L">
    <location>
        <position position="427"/>
    </location>
</feature>
<feature type="unsure residue" description="I or L">
    <location>
        <position position="429"/>
    </location>
</feature>
<feature type="unsure residue" description="I or L">
    <location>
        <position position="446"/>
    </location>
</feature>
<feature type="unsure residue" description="I or L">
    <location>
        <position position="453"/>
    </location>
</feature>
<feature type="unsure residue" description="I or L">
    <location>
        <position position="488"/>
    </location>
</feature>
<feature type="unsure residue" description="I or L">
    <location>
        <position position="489"/>
    </location>
</feature>
<feature type="unsure residue" description="I or L">
    <location>
        <position position="490"/>
    </location>
</feature>
<feature type="unsure residue" description="I or L">
    <location>
        <position position="511"/>
    </location>
</feature>
<feature type="unsure residue" evidence="2">
    <location>
        <position position="518"/>
    </location>
</feature>
<feature type="unsure residue" description="I or L">
    <location>
        <position position="520"/>
    </location>
</feature>
<accession>P83180</accession>
<dbReference type="SMR" id="P83180"/>
<dbReference type="GlyConnect" id="212">
    <property type="glycosylation" value="6 N-Linked glycans"/>
</dbReference>
<dbReference type="GO" id="GO:0005576">
    <property type="term" value="C:extracellular region"/>
    <property type="evidence" value="ECO:0007669"/>
    <property type="project" value="UniProtKB-SubCell"/>
</dbReference>
<dbReference type="GO" id="GO:0046872">
    <property type="term" value="F:metal ion binding"/>
    <property type="evidence" value="ECO:0007669"/>
    <property type="project" value="UniProtKB-KW"/>
</dbReference>
<dbReference type="GO" id="GO:0016491">
    <property type="term" value="F:oxidoreductase activity"/>
    <property type="evidence" value="ECO:0007669"/>
    <property type="project" value="InterPro"/>
</dbReference>
<dbReference type="GO" id="GO:0005344">
    <property type="term" value="F:oxygen carrier activity"/>
    <property type="evidence" value="ECO:0007669"/>
    <property type="project" value="UniProtKB-KW"/>
</dbReference>
<dbReference type="Gene3D" id="1.10.1280.10">
    <property type="entry name" value="Di-copper center containing domain from catechol oxidase"/>
    <property type="match status" value="1"/>
</dbReference>
<dbReference type="Gene3D" id="2.60.40.1520">
    <property type="entry name" value="Hemocyanin, C-terminal domain"/>
    <property type="match status" value="1"/>
</dbReference>
<dbReference type="Gene3D" id="1.20.1370.10">
    <property type="entry name" value="Hemocyanin, N-terminal domain"/>
    <property type="match status" value="1"/>
</dbReference>
<dbReference type="InterPro" id="IPR008922">
    <property type="entry name" value="Di-copper_centre_dom_sf"/>
</dbReference>
<dbReference type="InterPro" id="IPR013788">
    <property type="entry name" value="Hemocyanin/hexamerin"/>
</dbReference>
<dbReference type="InterPro" id="IPR000896">
    <property type="entry name" value="Hemocyanin/hexamerin_mid_dom"/>
</dbReference>
<dbReference type="InterPro" id="IPR005203">
    <property type="entry name" value="Hemocyanin_C"/>
</dbReference>
<dbReference type="InterPro" id="IPR037020">
    <property type="entry name" value="Hemocyanin_C_sf"/>
</dbReference>
<dbReference type="InterPro" id="IPR005204">
    <property type="entry name" value="Hemocyanin_N"/>
</dbReference>
<dbReference type="InterPro" id="IPR036697">
    <property type="entry name" value="Hemocyanin_N_sf"/>
</dbReference>
<dbReference type="InterPro" id="IPR014756">
    <property type="entry name" value="Ig_E-set"/>
</dbReference>
<dbReference type="InterPro" id="IPR002227">
    <property type="entry name" value="Tyrosinase_Cu-bd"/>
</dbReference>
<dbReference type="PANTHER" id="PTHR11511:SF5">
    <property type="entry name" value="FAT-BODY PROTEIN 1-RELATED"/>
    <property type="match status" value="1"/>
</dbReference>
<dbReference type="PANTHER" id="PTHR11511">
    <property type="entry name" value="LARVAL STORAGE PROTEIN/PHENOLOXIDASE"/>
    <property type="match status" value="1"/>
</dbReference>
<dbReference type="Pfam" id="PF03723">
    <property type="entry name" value="Hemocyanin_C"/>
    <property type="match status" value="1"/>
</dbReference>
<dbReference type="Pfam" id="PF00372">
    <property type="entry name" value="Hemocyanin_M"/>
    <property type="match status" value="1"/>
</dbReference>
<dbReference type="Pfam" id="PF03722">
    <property type="entry name" value="Hemocyanin_N"/>
    <property type="match status" value="1"/>
</dbReference>
<dbReference type="PRINTS" id="PR00187">
    <property type="entry name" value="HAEMOCYANIN"/>
</dbReference>
<dbReference type="SUPFAM" id="SSF48056">
    <property type="entry name" value="Di-copper centre-containing domain"/>
    <property type="match status" value="1"/>
</dbReference>
<dbReference type="SUPFAM" id="SSF81296">
    <property type="entry name" value="E set domains"/>
    <property type="match status" value="1"/>
</dbReference>
<dbReference type="SUPFAM" id="SSF48050">
    <property type="entry name" value="Hemocyanin, N-terminal domain"/>
    <property type="match status" value="1"/>
</dbReference>
<dbReference type="PROSITE" id="PS00209">
    <property type="entry name" value="HEMOCYANIN_1"/>
    <property type="match status" value="1"/>
</dbReference>
<dbReference type="PROSITE" id="PS00210">
    <property type="entry name" value="HEMOCYANIN_2"/>
    <property type="match status" value="1"/>
</dbReference>
<dbReference type="PROSITE" id="PS00498">
    <property type="entry name" value="TYROSINASE_2"/>
    <property type="match status" value="1"/>
</dbReference>
<evidence type="ECO:0000250" key="1"/>
<evidence type="ECO:0000305" key="2"/>
<sequence length="566" mass="65289">DASGATLAKRQQVVNHLLEHIYDHTHFTDLKNIAGTFSPEAATSIYTDDMEELRDGRLLEQHHWFSLFNTRQRMLFEVLIHCKSWECFLDNAAYFRERMNEGEFVYAIYVAVIHSGIGHGIVIPPIYEVTPHIFTNSEVINKAYSAKMTQTPGRFNMDFTGTKKNKEQRVAYFGEDIGMNIHHVTWHMDFPFWWKDSYGYHLDRKGELFFWVHHQLTARFDSERISNWIDVVDEIHWSCIEGFAPHTSYKYGGEFPARPDNVHFEDVDGVARVRDSRIRDALAHGYLLDNSGNKSSVYSPNVQYYGAIHNTAHIMIGRQGDHKFDMPPGVMEHFETATRDPSFFRLHKYMDNIFKEHKDSLPPYTKNDIAVPGVVIDSVAQLKTFFDTFEVNLGNAKVADVAISADVHRINHEEFSYNIDISNTDKIFICPVKDDNGIMDKFYKSIDPGTNHIVRKSVDSSVTVPDRQYALDLHMFERSCGIPNRDMIIIESRPDGMDFALFVTVDDPEEIGATHSQHGIKKYPDKKPMGYPVDRSIPDNRVFLESPNIKRTYVKVFHDEHGGEQH</sequence>